<feature type="chain" id="PRO_0000165613" description="Holliday junction branch migration complex subunit RuvB">
    <location>
        <begin position="1"/>
        <end position="347"/>
    </location>
</feature>
<feature type="region of interest" description="Large ATPase domain (RuvB-L)" evidence="1">
    <location>
        <begin position="1"/>
        <end position="183"/>
    </location>
</feature>
<feature type="region of interest" description="Small ATPAse domain (RuvB-S)" evidence="1">
    <location>
        <begin position="184"/>
        <end position="254"/>
    </location>
</feature>
<feature type="region of interest" description="Head domain (RuvB-H)" evidence="1">
    <location>
        <begin position="257"/>
        <end position="347"/>
    </location>
</feature>
<feature type="binding site" evidence="1">
    <location>
        <position position="22"/>
    </location>
    <ligand>
        <name>ATP</name>
        <dbReference type="ChEBI" id="CHEBI:30616"/>
    </ligand>
</feature>
<feature type="binding site" evidence="1">
    <location>
        <position position="23"/>
    </location>
    <ligand>
        <name>ATP</name>
        <dbReference type="ChEBI" id="CHEBI:30616"/>
    </ligand>
</feature>
<feature type="binding site" evidence="1">
    <location>
        <position position="64"/>
    </location>
    <ligand>
        <name>ATP</name>
        <dbReference type="ChEBI" id="CHEBI:30616"/>
    </ligand>
</feature>
<feature type="binding site" evidence="1">
    <location>
        <position position="67"/>
    </location>
    <ligand>
        <name>ATP</name>
        <dbReference type="ChEBI" id="CHEBI:30616"/>
    </ligand>
</feature>
<feature type="binding site" evidence="1">
    <location>
        <position position="68"/>
    </location>
    <ligand>
        <name>ATP</name>
        <dbReference type="ChEBI" id="CHEBI:30616"/>
    </ligand>
</feature>
<feature type="binding site" evidence="1">
    <location>
        <position position="68"/>
    </location>
    <ligand>
        <name>Mg(2+)</name>
        <dbReference type="ChEBI" id="CHEBI:18420"/>
    </ligand>
</feature>
<feature type="binding site" evidence="1">
    <location>
        <position position="69"/>
    </location>
    <ligand>
        <name>ATP</name>
        <dbReference type="ChEBI" id="CHEBI:30616"/>
    </ligand>
</feature>
<feature type="binding site" evidence="1">
    <location>
        <begin position="130"/>
        <end position="132"/>
    </location>
    <ligand>
        <name>ATP</name>
        <dbReference type="ChEBI" id="CHEBI:30616"/>
    </ligand>
</feature>
<feature type="binding site" evidence="1">
    <location>
        <position position="173"/>
    </location>
    <ligand>
        <name>ATP</name>
        <dbReference type="ChEBI" id="CHEBI:30616"/>
    </ligand>
</feature>
<feature type="binding site" evidence="1">
    <location>
        <position position="183"/>
    </location>
    <ligand>
        <name>ATP</name>
        <dbReference type="ChEBI" id="CHEBI:30616"/>
    </ligand>
</feature>
<feature type="binding site" evidence="1">
    <location>
        <position position="220"/>
    </location>
    <ligand>
        <name>ATP</name>
        <dbReference type="ChEBI" id="CHEBI:30616"/>
    </ligand>
</feature>
<feature type="binding site" evidence="1">
    <location>
        <position position="312"/>
    </location>
    <ligand>
        <name>DNA</name>
        <dbReference type="ChEBI" id="CHEBI:16991"/>
    </ligand>
</feature>
<feature type="binding site" evidence="1">
    <location>
        <position position="317"/>
    </location>
    <ligand>
        <name>DNA</name>
        <dbReference type="ChEBI" id="CHEBI:16991"/>
    </ligand>
</feature>
<sequence>MSEERFVSGHRRPEDARIEETLRPQRLADYPGQERVKEQLSIYIAAAKKRGEPLDHVLLYGPPGLGKTTLAHIIAHEMGVNLRITSGPAISHQGDLAAILTQLSEGDVLFVDEIHRLNRLVEETLYPAMEDFALDIILGKGPAARTLRLDLPRFTLIGATTRYGALTSPLRDRFGVVLQLQFYSEEELTRILMRAARILNVPLDPGGAREIARRSRGTPRVANRLLRRLRDYAQVRADGVITRDVADAGLRMMGVDAMGLDTVDHKVLLTIIHHYGGGPVGLDTIAAATSEEPETIEDVYEPYLMQIGFLQRTPRGRVATRAAYEYLNIPYTDHPDEPEGPVQPRLF</sequence>
<comment type="function">
    <text evidence="1">The RuvA-RuvB-RuvC complex processes Holliday junction (HJ) DNA during genetic recombination and DNA repair, while the RuvA-RuvB complex plays an important role in the rescue of blocked DNA replication forks via replication fork reversal (RFR). RuvA specifically binds to HJ cruciform DNA, conferring on it an open structure. The RuvB hexamer acts as an ATP-dependent pump, pulling dsDNA into and through the RuvAB complex. RuvB forms 2 homohexamers on either side of HJ DNA bound by 1 or 2 RuvA tetramers; 4 subunits per hexamer contact DNA at a time. Coordinated motions by a converter formed by DNA-disengaged RuvB subunits stimulates ATP hydrolysis and nucleotide exchange. Immobilization of the converter enables RuvB to convert the ATP-contained energy into a lever motion, pulling 2 nucleotides of DNA out of the RuvA tetramer per ATP hydrolyzed, thus driving DNA branch migration. The RuvB motors rotate together with the DNA substrate, which together with the progressing nucleotide cycle form the mechanistic basis for DNA recombination by continuous HJ branch migration. Branch migration allows RuvC to scan DNA until it finds its consensus sequence, where it cleaves and resolves cruciform DNA.</text>
</comment>
<comment type="catalytic activity">
    <reaction evidence="1">
        <text>ATP + H2O = ADP + phosphate + H(+)</text>
        <dbReference type="Rhea" id="RHEA:13065"/>
        <dbReference type="ChEBI" id="CHEBI:15377"/>
        <dbReference type="ChEBI" id="CHEBI:15378"/>
        <dbReference type="ChEBI" id="CHEBI:30616"/>
        <dbReference type="ChEBI" id="CHEBI:43474"/>
        <dbReference type="ChEBI" id="CHEBI:456216"/>
    </reaction>
</comment>
<comment type="subunit">
    <text evidence="1">Homohexamer. Forms an RuvA(8)-RuvB(12)-Holliday junction (HJ) complex. HJ DNA is sandwiched between 2 RuvA tetramers; dsDNA enters through RuvA and exits via RuvB. An RuvB hexamer assembles on each DNA strand where it exits the tetramer. Each RuvB hexamer is contacted by two RuvA subunits (via domain III) on 2 adjacent RuvB subunits; this complex drives branch migration. In the full resolvosome a probable DNA-RuvA(4)-RuvB(12)-RuvC(2) complex forms which resolves the HJ.</text>
</comment>
<comment type="subcellular location">
    <subcellularLocation>
        <location evidence="1">Cytoplasm</location>
    </subcellularLocation>
</comment>
<comment type="domain">
    <text evidence="1">Has 3 domains, the large (RuvB-L) and small ATPase (RuvB-S) domains and the C-terminal head (RuvB-H) domain. The head domain binds DNA, while the ATPase domains jointly bind ATP, ADP or are empty depending on the state of the subunit in the translocation cycle. During a single DNA translocation step the structure of each domain remains the same, but their relative positions change.</text>
</comment>
<comment type="similarity">
    <text evidence="1">Belongs to the RuvB family.</text>
</comment>
<organism>
    <name type="scientific">Symbiobacterium thermophilum (strain DSM 24528 / JCM 14929 / IAM 14863 / T)</name>
    <dbReference type="NCBI Taxonomy" id="292459"/>
    <lineage>
        <taxon>Bacteria</taxon>
        <taxon>Bacillati</taxon>
        <taxon>Bacillota</taxon>
        <taxon>Clostridia</taxon>
        <taxon>Eubacteriales</taxon>
        <taxon>Symbiobacteriaceae</taxon>
        <taxon>Symbiobacterium</taxon>
    </lineage>
</organism>
<name>RUVB_SYMTH</name>
<accession>Q67Q97</accession>
<proteinExistence type="inferred from homology"/>
<gene>
    <name evidence="1" type="primary">ruvB</name>
    <name type="ordered locus">STH1161</name>
</gene>
<reference key="1">
    <citation type="journal article" date="2004" name="Nucleic Acids Res.">
        <title>Genome sequence of Symbiobacterium thermophilum, an uncultivable bacterium that depends on microbial commensalism.</title>
        <authorList>
            <person name="Ueda K."/>
            <person name="Yamashita A."/>
            <person name="Ishikawa J."/>
            <person name="Shimada M."/>
            <person name="Watsuji T."/>
            <person name="Morimura K."/>
            <person name="Ikeda H."/>
            <person name="Hattori M."/>
            <person name="Beppu T."/>
        </authorList>
    </citation>
    <scope>NUCLEOTIDE SEQUENCE [LARGE SCALE GENOMIC DNA]</scope>
    <source>
        <strain>DSM 24528 / JCM 14929 / IAM 14863 / T</strain>
    </source>
</reference>
<keyword id="KW-0067">ATP-binding</keyword>
<keyword id="KW-0963">Cytoplasm</keyword>
<keyword id="KW-0227">DNA damage</keyword>
<keyword id="KW-0233">DNA recombination</keyword>
<keyword id="KW-0234">DNA repair</keyword>
<keyword id="KW-0238">DNA-binding</keyword>
<keyword id="KW-0378">Hydrolase</keyword>
<keyword id="KW-0547">Nucleotide-binding</keyword>
<keyword id="KW-1185">Reference proteome</keyword>
<protein>
    <recommendedName>
        <fullName evidence="1">Holliday junction branch migration complex subunit RuvB</fullName>
        <ecNumber evidence="1">3.6.4.-</ecNumber>
    </recommendedName>
</protein>
<dbReference type="EC" id="3.6.4.-" evidence="1"/>
<dbReference type="EMBL" id="AP006840">
    <property type="protein sequence ID" value="BAD40146.1"/>
    <property type="molecule type" value="Genomic_DNA"/>
</dbReference>
<dbReference type="RefSeq" id="WP_011195292.1">
    <property type="nucleotide sequence ID" value="NC_006177.1"/>
</dbReference>
<dbReference type="SMR" id="Q67Q97"/>
<dbReference type="STRING" id="292459.STH1161"/>
<dbReference type="KEGG" id="sth:STH1161"/>
<dbReference type="eggNOG" id="COG2255">
    <property type="taxonomic scope" value="Bacteria"/>
</dbReference>
<dbReference type="HOGENOM" id="CLU_055599_1_0_9"/>
<dbReference type="OrthoDB" id="9804478at2"/>
<dbReference type="Proteomes" id="UP000000417">
    <property type="component" value="Chromosome"/>
</dbReference>
<dbReference type="GO" id="GO:0005737">
    <property type="term" value="C:cytoplasm"/>
    <property type="evidence" value="ECO:0007669"/>
    <property type="project" value="UniProtKB-SubCell"/>
</dbReference>
<dbReference type="GO" id="GO:0048476">
    <property type="term" value="C:Holliday junction resolvase complex"/>
    <property type="evidence" value="ECO:0007669"/>
    <property type="project" value="UniProtKB-UniRule"/>
</dbReference>
<dbReference type="GO" id="GO:0005524">
    <property type="term" value="F:ATP binding"/>
    <property type="evidence" value="ECO:0007669"/>
    <property type="project" value="UniProtKB-UniRule"/>
</dbReference>
<dbReference type="GO" id="GO:0016887">
    <property type="term" value="F:ATP hydrolysis activity"/>
    <property type="evidence" value="ECO:0007669"/>
    <property type="project" value="InterPro"/>
</dbReference>
<dbReference type="GO" id="GO:0000400">
    <property type="term" value="F:four-way junction DNA binding"/>
    <property type="evidence" value="ECO:0007669"/>
    <property type="project" value="UniProtKB-UniRule"/>
</dbReference>
<dbReference type="GO" id="GO:0009378">
    <property type="term" value="F:four-way junction helicase activity"/>
    <property type="evidence" value="ECO:0007669"/>
    <property type="project" value="InterPro"/>
</dbReference>
<dbReference type="GO" id="GO:0006310">
    <property type="term" value="P:DNA recombination"/>
    <property type="evidence" value="ECO:0007669"/>
    <property type="project" value="UniProtKB-UniRule"/>
</dbReference>
<dbReference type="GO" id="GO:0006281">
    <property type="term" value="P:DNA repair"/>
    <property type="evidence" value="ECO:0007669"/>
    <property type="project" value="UniProtKB-UniRule"/>
</dbReference>
<dbReference type="CDD" id="cd00009">
    <property type="entry name" value="AAA"/>
    <property type="match status" value="1"/>
</dbReference>
<dbReference type="Gene3D" id="1.10.8.60">
    <property type="match status" value="1"/>
</dbReference>
<dbReference type="Gene3D" id="3.40.50.300">
    <property type="entry name" value="P-loop containing nucleotide triphosphate hydrolases"/>
    <property type="match status" value="1"/>
</dbReference>
<dbReference type="Gene3D" id="1.10.10.10">
    <property type="entry name" value="Winged helix-like DNA-binding domain superfamily/Winged helix DNA-binding domain"/>
    <property type="match status" value="1"/>
</dbReference>
<dbReference type="HAMAP" id="MF_00016">
    <property type="entry name" value="DNA_HJ_migration_RuvB"/>
    <property type="match status" value="1"/>
</dbReference>
<dbReference type="InterPro" id="IPR003593">
    <property type="entry name" value="AAA+_ATPase"/>
</dbReference>
<dbReference type="InterPro" id="IPR041445">
    <property type="entry name" value="AAA_lid_4"/>
</dbReference>
<dbReference type="InterPro" id="IPR004605">
    <property type="entry name" value="DNA_helicase_Holl-junc_RuvB"/>
</dbReference>
<dbReference type="InterPro" id="IPR027417">
    <property type="entry name" value="P-loop_NTPase"/>
</dbReference>
<dbReference type="InterPro" id="IPR008824">
    <property type="entry name" value="RuvB-like_N"/>
</dbReference>
<dbReference type="InterPro" id="IPR008823">
    <property type="entry name" value="RuvB_C"/>
</dbReference>
<dbReference type="InterPro" id="IPR036388">
    <property type="entry name" value="WH-like_DNA-bd_sf"/>
</dbReference>
<dbReference type="InterPro" id="IPR036390">
    <property type="entry name" value="WH_DNA-bd_sf"/>
</dbReference>
<dbReference type="NCBIfam" id="NF000868">
    <property type="entry name" value="PRK00080.1"/>
    <property type="match status" value="1"/>
</dbReference>
<dbReference type="NCBIfam" id="TIGR00635">
    <property type="entry name" value="ruvB"/>
    <property type="match status" value="1"/>
</dbReference>
<dbReference type="PANTHER" id="PTHR42848">
    <property type="match status" value="1"/>
</dbReference>
<dbReference type="PANTHER" id="PTHR42848:SF1">
    <property type="entry name" value="HOLLIDAY JUNCTION BRANCH MIGRATION COMPLEX SUBUNIT RUVB"/>
    <property type="match status" value="1"/>
</dbReference>
<dbReference type="Pfam" id="PF17864">
    <property type="entry name" value="AAA_lid_4"/>
    <property type="match status" value="1"/>
</dbReference>
<dbReference type="Pfam" id="PF05491">
    <property type="entry name" value="RuvB_C"/>
    <property type="match status" value="1"/>
</dbReference>
<dbReference type="Pfam" id="PF05496">
    <property type="entry name" value="RuvB_N"/>
    <property type="match status" value="1"/>
</dbReference>
<dbReference type="SMART" id="SM00382">
    <property type="entry name" value="AAA"/>
    <property type="match status" value="1"/>
</dbReference>
<dbReference type="SUPFAM" id="SSF52540">
    <property type="entry name" value="P-loop containing nucleoside triphosphate hydrolases"/>
    <property type="match status" value="1"/>
</dbReference>
<dbReference type="SUPFAM" id="SSF46785">
    <property type="entry name" value="Winged helix' DNA-binding domain"/>
    <property type="match status" value="1"/>
</dbReference>
<evidence type="ECO:0000255" key="1">
    <source>
        <dbReference type="HAMAP-Rule" id="MF_00016"/>
    </source>
</evidence>